<protein>
    <recommendedName>
        <fullName>Lysophosphatidic acid receptor 5</fullName>
        <shortName>LPA receptor 5</shortName>
        <shortName>LPA-5</shortName>
    </recommendedName>
    <alternativeName>
        <fullName>G-protein coupled receptor 92</fullName>
    </alternativeName>
</protein>
<name>LPAR5_MOUSE</name>
<proteinExistence type="evidence at transcript level"/>
<sequence>MFANSSANTTSTNSSVLQCPDYRDTHRLHMVVYSLVLATGLPLNALALWVFLRVLRVHSVVSVYMCNLAASDLLFTLSLPLRLSYYAQHHWPFPGFLCQTSGAIFQMNMYGSCLFLMLINVDRYAAIVHPLRLRHLRRPRVARRLCLGVWALILLFAVPAARVHSPSHCTYKNITVRLCFESFSDELWKGRLLPLLLLAEILGFLLPLAAVVYSSGRVFWTLARPDATQSQRRRKTVRLLLANLIIFLLCFVPYNSTLAVYGLLRANLVKNSIQDRDQVRGVLMIMVLLAGANCVLDPLVYYFSAEGFRNTLRNLGAPLNTRPLATNGAAGVLTELPSESTQNTGQDATSQVLLQPATLGTPPDNCSQDSAL</sequence>
<comment type="function">
    <text evidence="1">Receptor for lysophosphatidic acid (LPA), a mediator of diverse cellular activities.</text>
</comment>
<comment type="subcellular location">
    <subcellularLocation>
        <location>Cell membrane</location>
        <topology>Multi-pass membrane protein</topology>
    </subcellularLocation>
</comment>
<comment type="similarity">
    <text evidence="3">Belongs to the G-protein coupled receptor 1 family.</text>
</comment>
<organism>
    <name type="scientific">Mus musculus</name>
    <name type="common">Mouse</name>
    <dbReference type="NCBI Taxonomy" id="10090"/>
    <lineage>
        <taxon>Eukaryota</taxon>
        <taxon>Metazoa</taxon>
        <taxon>Chordata</taxon>
        <taxon>Craniata</taxon>
        <taxon>Vertebrata</taxon>
        <taxon>Euteleostomi</taxon>
        <taxon>Mammalia</taxon>
        <taxon>Eutheria</taxon>
        <taxon>Euarchontoglires</taxon>
        <taxon>Glires</taxon>
        <taxon>Rodentia</taxon>
        <taxon>Myomorpha</taxon>
        <taxon>Muroidea</taxon>
        <taxon>Muridae</taxon>
        <taxon>Murinae</taxon>
        <taxon>Mus</taxon>
        <taxon>Mus</taxon>
    </lineage>
</organism>
<gene>
    <name type="primary">Lpar5</name>
    <name type="synonym">Gm1072</name>
    <name type="synonym">Gpr92</name>
</gene>
<dbReference type="EMBL" id="BC116702">
    <property type="protein sequence ID" value="AAI16703.2"/>
    <property type="molecule type" value="mRNA"/>
</dbReference>
<dbReference type="EMBL" id="BC117528">
    <property type="protein sequence ID" value="AAI17529.2"/>
    <property type="molecule type" value="mRNA"/>
</dbReference>
<dbReference type="EMBL" id="AK131863">
    <property type="protein sequence ID" value="BAE20836.1"/>
    <property type="molecule type" value="mRNA"/>
</dbReference>
<dbReference type="EMBL" id="AY255621">
    <property type="protein sequence ID" value="AAO85133.1"/>
    <property type="molecule type" value="mRNA"/>
</dbReference>
<dbReference type="RefSeq" id="NP_001156740.2">
    <property type="nucleotide sequence ID" value="NM_001163268.2"/>
</dbReference>
<dbReference type="RefSeq" id="NP_001156741.2">
    <property type="nucleotide sequence ID" value="NM_001163269.2"/>
</dbReference>
<dbReference type="SMR" id="Q149R9"/>
<dbReference type="FunCoup" id="Q149R9">
    <property type="interactions" value="658"/>
</dbReference>
<dbReference type="STRING" id="10090.ENSMUSP00000132511"/>
<dbReference type="GlyCosmos" id="Q149R9">
    <property type="glycosylation" value="4 sites, No reported glycans"/>
</dbReference>
<dbReference type="GlyGen" id="Q149R9">
    <property type="glycosylation" value="4 sites"/>
</dbReference>
<dbReference type="iPTMnet" id="Q149R9"/>
<dbReference type="PhosphoSitePlus" id="Q149R9"/>
<dbReference type="PaxDb" id="10090-ENSMUSP00000085630"/>
<dbReference type="ProteomicsDB" id="290142"/>
<dbReference type="Ensembl" id="ENSMUST00000088292.7">
    <property type="protein sequence ID" value="ENSMUSP00000085630.7"/>
    <property type="gene ID" value="ENSMUSG00000067714.15"/>
</dbReference>
<dbReference type="Ensembl" id="ENSMUST00000140346.10">
    <property type="protein sequence ID" value="ENSMUSP00000119904.4"/>
    <property type="gene ID" value="ENSMUSG00000067714.15"/>
</dbReference>
<dbReference type="GeneID" id="381810"/>
<dbReference type="KEGG" id="mmu:381810"/>
<dbReference type="AGR" id="MGI:2685918"/>
<dbReference type="CTD" id="57121"/>
<dbReference type="MGI" id="MGI:2685918">
    <property type="gene designation" value="Lpar5"/>
</dbReference>
<dbReference type="eggNOG" id="ENOG502QUH0">
    <property type="taxonomic scope" value="Eukaryota"/>
</dbReference>
<dbReference type="GeneTree" id="ENSGT00950000183136"/>
<dbReference type="InParanoid" id="Q149R9"/>
<dbReference type="OrthoDB" id="5781782at2759"/>
<dbReference type="PhylomeDB" id="Q149R9"/>
<dbReference type="Reactome" id="R-MMU-416476">
    <property type="pathway name" value="G alpha (q) signalling events"/>
</dbReference>
<dbReference type="Reactome" id="R-MMU-418594">
    <property type="pathway name" value="G alpha (i) signalling events"/>
</dbReference>
<dbReference type="Reactome" id="R-MMU-419408">
    <property type="pathway name" value="Lysosphingolipid and LPA receptors"/>
</dbReference>
<dbReference type="PRO" id="PR:Q149R9"/>
<dbReference type="Proteomes" id="UP000000589">
    <property type="component" value="Chromosome 6"/>
</dbReference>
<dbReference type="RNAct" id="Q149R9">
    <property type="molecule type" value="protein"/>
</dbReference>
<dbReference type="GO" id="GO:0005886">
    <property type="term" value="C:plasma membrane"/>
    <property type="evidence" value="ECO:0007669"/>
    <property type="project" value="UniProtKB-SubCell"/>
</dbReference>
<dbReference type="GO" id="GO:0004930">
    <property type="term" value="F:G protein-coupled receptor activity"/>
    <property type="evidence" value="ECO:0007669"/>
    <property type="project" value="UniProtKB-KW"/>
</dbReference>
<dbReference type="GO" id="GO:0048266">
    <property type="term" value="P:behavioral response to pain"/>
    <property type="evidence" value="ECO:0000315"/>
    <property type="project" value="MGI"/>
</dbReference>
<dbReference type="FunFam" id="1.20.1070.10:FF:000017">
    <property type="entry name" value="lysophosphatidic acid receptor 4"/>
    <property type="match status" value="1"/>
</dbReference>
<dbReference type="Gene3D" id="1.20.1070.10">
    <property type="entry name" value="Rhodopsin 7-helix transmembrane proteins"/>
    <property type="match status" value="1"/>
</dbReference>
<dbReference type="InterPro" id="IPR000276">
    <property type="entry name" value="GPCR_Rhodpsn"/>
</dbReference>
<dbReference type="InterPro" id="IPR017452">
    <property type="entry name" value="GPCR_Rhodpsn_7TM"/>
</dbReference>
<dbReference type="PANTHER" id="PTHR24234:SF6">
    <property type="entry name" value="LYSOPHOSPHATIDIC ACID RECEPTOR 5"/>
    <property type="match status" value="1"/>
</dbReference>
<dbReference type="PANTHER" id="PTHR24234">
    <property type="entry name" value="LYSOPHOSPHATIDIC ACID RECEPTOR 5/SPHINGOSYLPHOSPHORYLCHOLINE RECEPTOR"/>
    <property type="match status" value="1"/>
</dbReference>
<dbReference type="Pfam" id="PF00001">
    <property type="entry name" value="7tm_1"/>
    <property type="match status" value="1"/>
</dbReference>
<dbReference type="PRINTS" id="PR00237">
    <property type="entry name" value="GPCRRHODOPSN"/>
</dbReference>
<dbReference type="PRINTS" id="PR01157">
    <property type="entry name" value="P2YPURNOCPTR"/>
</dbReference>
<dbReference type="SUPFAM" id="SSF81321">
    <property type="entry name" value="Family A G protein-coupled receptor-like"/>
    <property type="match status" value="1"/>
</dbReference>
<dbReference type="PROSITE" id="PS00237">
    <property type="entry name" value="G_PROTEIN_RECEP_F1_1"/>
    <property type="match status" value="1"/>
</dbReference>
<dbReference type="PROSITE" id="PS50262">
    <property type="entry name" value="G_PROTEIN_RECEP_F1_2"/>
    <property type="match status" value="1"/>
</dbReference>
<reference key="1">
    <citation type="journal article" date="2004" name="Genome Res.">
        <title>The status, quality, and expansion of the NIH full-length cDNA project: the Mammalian Gene Collection (MGC).</title>
        <authorList>
            <consortium name="The MGC Project Team"/>
        </authorList>
    </citation>
    <scope>NUCLEOTIDE SEQUENCE [LARGE SCALE MRNA]</scope>
</reference>
<reference key="2">
    <citation type="journal article" date="2005" name="Science">
        <title>The transcriptional landscape of the mammalian genome.</title>
        <authorList>
            <person name="Carninci P."/>
            <person name="Kasukawa T."/>
            <person name="Katayama S."/>
            <person name="Gough J."/>
            <person name="Frith M.C."/>
            <person name="Maeda N."/>
            <person name="Oyama R."/>
            <person name="Ravasi T."/>
            <person name="Lenhard B."/>
            <person name="Wells C."/>
            <person name="Kodzius R."/>
            <person name="Shimokawa K."/>
            <person name="Bajic V.B."/>
            <person name="Brenner S.E."/>
            <person name="Batalov S."/>
            <person name="Forrest A.R."/>
            <person name="Zavolan M."/>
            <person name="Davis M.J."/>
            <person name="Wilming L.G."/>
            <person name="Aidinis V."/>
            <person name="Allen J.E."/>
            <person name="Ambesi-Impiombato A."/>
            <person name="Apweiler R."/>
            <person name="Aturaliya R.N."/>
            <person name="Bailey T.L."/>
            <person name="Bansal M."/>
            <person name="Baxter L."/>
            <person name="Beisel K.W."/>
            <person name="Bersano T."/>
            <person name="Bono H."/>
            <person name="Chalk A.M."/>
            <person name="Chiu K.P."/>
            <person name="Choudhary V."/>
            <person name="Christoffels A."/>
            <person name="Clutterbuck D.R."/>
            <person name="Crowe M.L."/>
            <person name="Dalla E."/>
            <person name="Dalrymple B.P."/>
            <person name="de Bono B."/>
            <person name="Della Gatta G."/>
            <person name="di Bernardo D."/>
            <person name="Down T."/>
            <person name="Engstrom P."/>
            <person name="Fagiolini M."/>
            <person name="Faulkner G."/>
            <person name="Fletcher C.F."/>
            <person name="Fukushima T."/>
            <person name="Furuno M."/>
            <person name="Futaki S."/>
            <person name="Gariboldi M."/>
            <person name="Georgii-Hemming P."/>
            <person name="Gingeras T.R."/>
            <person name="Gojobori T."/>
            <person name="Green R.E."/>
            <person name="Gustincich S."/>
            <person name="Harbers M."/>
            <person name="Hayashi Y."/>
            <person name="Hensch T.K."/>
            <person name="Hirokawa N."/>
            <person name="Hill D."/>
            <person name="Huminiecki L."/>
            <person name="Iacono M."/>
            <person name="Ikeo K."/>
            <person name="Iwama A."/>
            <person name="Ishikawa T."/>
            <person name="Jakt M."/>
            <person name="Kanapin A."/>
            <person name="Katoh M."/>
            <person name="Kawasawa Y."/>
            <person name="Kelso J."/>
            <person name="Kitamura H."/>
            <person name="Kitano H."/>
            <person name="Kollias G."/>
            <person name="Krishnan S.P."/>
            <person name="Kruger A."/>
            <person name="Kummerfeld S.K."/>
            <person name="Kurochkin I.V."/>
            <person name="Lareau L.F."/>
            <person name="Lazarevic D."/>
            <person name="Lipovich L."/>
            <person name="Liu J."/>
            <person name="Liuni S."/>
            <person name="McWilliam S."/>
            <person name="Madan Babu M."/>
            <person name="Madera M."/>
            <person name="Marchionni L."/>
            <person name="Matsuda H."/>
            <person name="Matsuzawa S."/>
            <person name="Miki H."/>
            <person name="Mignone F."/>
            <person name="Miyake S."/>
            <person name="Morris K."/>
            <person name="Mottagui-Tabar S."/>
            <person name="Mulder N."/>
            <person name="Nakano N."/>
            <person name="Nakauchi H."/>
            <person name="Ng P."/>
            <person name="Nilsson R."/>
            <person name="Nishiguchi S."/>
            <person name="Nishikawa S."/>
            <person name="Nori F."/>
            <person name="Ohara O."/>
            <person name="Okazaki Y."/>
            <person name="Orlando V."/>
            <person name="Pang K.C."/>
            <person name="Pavan W.J."/>
            <person name="Pavesi G."/>
            <person name="Pesole G."/>
            <person name="Petrovsky N."/>
            <person name="Piazza S."/>
            <person name="Reed J."/>
            <person name="Reid J.F."/>
            <person name="Ring B.Z."/>
            <person name="Ringwald M."/>
            <person name="Rost B."/>
            <person name="Ruan Y."/>
            <person name="Salzberg S.L."/>
            <person name="Sandelin A."/>
            <person name="Schneider C."/>
            <person name="Schoenbach C."/>
            <person name="Sekiguchi K."/>
            <person name="Semple C.A."/>
            <person name="Seno S."/>
            <person name="Sessa L."/>
            <person name="Sheng Y."/>
            <person name="Shibata Y."/>
            <person name="Shimada H."/>
            <person name="Shimada K."/>
            <person name="Silva D."/>
            <person name="Sinclair B."/>
            <person name="Sperling S."/>
            <person name="Stupka E."/>
            <person name="Sugiura K."/>
            <person name="Sultana R."/>
            <person name="Takenaka Y."/>
            <person name="Taki K."/>
            <person name="Tammoja K."/>
            <person name="Tan S.L."/>
            <person name="Tang S."/>
            <person name="Taylor M.S."/>
            <person name="Tegner J."/>
            <person name="Teichmann S.A."/>
            <person name="Ueda H.R."/>
            <person name="van Nimwegen E."/>
            <person name="Verardo R."/>
            <person name="Wei C.L."/>
            <person name="Yagi K."/>
            <person name="Yamanishi H."/>
            <person name="Zabarovsky E."/>
            <person name="Zhu S."/>
            <person name="Zimmer A."/>
            <person name="Hide W."/>
            <person name="Bult C."/>
            <person name="Grimmond S.M."/>
            <person name="Teasdale R.D."/>
            <person name="Liu E.T."/>
            <person name="Brusic V."/>
            <person name="Quackenbush J."/>
            <person name="Wahlestedt C."/>
            <person name="Mattick J.S."/>
            <person name="Hume D.A."/>
            <person name="Kai C."/>
            <person name="Sasaki D."/>
            <person name="Tomaru Y."/>
            <person name="Fukuda S."/>
            <person name="Kanamori-Katayama M."/>
            <person name="Suzuki M."/>
            <person name="Aoki J."/>
            <person name="Arakawa T."/>
            <person name="Iida J."/>
            <person name="Imamura K."/>
            <person name="Itoh M."/>
            <person name="Kato T."/>
            <person name="Kawaji H."/>
            <person name="Kawagashira N."/>
            <person name="Kawashima T."/>
            <person name="Kojima M."/>
            <person name="Kondo S."/>
            <person name="Konno H."/>
            <person name="Nakano K."/>
            <person name="Ninomiya N."/>
            <person name="Nishio T."/>
            <person name="Okada M."/>
            <person name="Plessy C."/>
            <person name="Shibata K."/>
            <person name="Shiraki T."/>
            <person name="Suzuki S."/>
            <person name="Tagami M."/>
            <person name="Waki K."/>
            <person name="Watahiki A."/>
            <person name="Okamura-Oho Y."/>
            <person name="Suzuki H."/>
            <person name="Kawai J."/>
            <person name="Hayashizaki Y."/>
        </authorList>
    </citation>
    <scope>NUCLEOTIDE SEQUENCE [LARGE SCALE MRNA] OF 1-242</scope>
    <source>
        <strain>C57BL/6J</strain>
        <tissue>Small intestine</tissue>
    </source>
</reference>
<reference key="3">
    <citation type="journal article" date="2003" name="Proc. Natl. Acad. Sci. U.S.A.">
        <title>The G protein-coupled receptor repertoires of human and mouse.</title>
        <authorList>
            <person name="Vassilatis D.K."/>
            <person name="Hohmann J.G."/>
            <person name="Zeng H."/>
            <person name="Li F."/>
            <person name="Ranchalis J.E."/>
            <person name="Mortrud M.T."/>
            <person name="Brown A."/>
            <person name="Rodriguez S.S."/>
            <person name="Weller J.R."/>
            <person name="Wright A.C."/>
            <person name="Bergmann J.E."/>
            <person name="Gaitanaris G.A."/>
        </authorList>
    </citation>
    <scope>NUCLEOTIDE SEQUENCE [LARGE SCALE MRNA] OF 17-104</scope>
</reference>
<feature type="chain" id="PRO_0000303236" description="Lysophosphatidic acid receptor 5">
    <location>
        <begin position="1"/>
        <end position="372"/>
    </location>
</feature>
<feature type="topological domain" description="Extracellular" evidence="2">
    <location>
        <begin position="1"/>
        <end position="30"/>
    </location>
</feature>
<feature type="transmembrane region" description="Helical; Name=1" evidence="2">
    <location>
        <begin position="31"/>
        <end position="51"/>
    </location>
</feature>
<feature type="topological domain" description="Cytoplasmic" evidence="2">
    <location>
        <begin position="52"/>
        <end position="59"/>
    </location>
</feature>
<feature type="transmembrane region" description="Helical; Name=2" evidence="2">
    <location>
        <begin position="60"/>
        <end position="80"/>
    </location>
</feature>
<feature type="topological domain" description="Extracellular" evidence="2">
    <location>
        <begin position="81"/>
        <end position="100"/>
    </location>
</feature>
<feature type="transmembrane region" description="Helical; Name=3" evidence="2">
    <location>
        <begin position="101"/>
        <end position="121"/>
    </location>
</feature>
<feature type="topological domain" description="Cytoplasmic" evidence="2">
    <location>
        <begin position="122"/>
        <end position="140"/>
    </location>
</feature>
<feature type="transmembrane region" description="Helical; Name=4" evidence="2">
    <location>
        <begin position="141"/>
        <end position="161"/>
    </location>
</feature>
<feature type="topological domain" description="Extracellular" evidence="2">
    <location>
        <begin position="162"/>
        <end position="191"/>
    </location>
</feature>
<feature type="transmembrane region" description="Helical; Name=5" evidence="2">
    <location>
        <begin position="192"/>
        <end position="212"/>
    </location>
</feature>
<feature type="topological domain" description="Cytoplasmic" evidence="2">
    <location>
        <begin position="213"/>
        <end position="243"/>
    </location>
</feature>
<feature type="transmembrane region" description="Helical; Name=6" evidence="2">
    <location>
        <begin position="244"/>
        <end position="264"/>
    </location>
</feature>
<feature type="topological domain" description="Extracellular" evidence="2">
    <location>
        <begin position="265"/>
        <end position="280"/>
    </location>
</feature>
<feature type="transmembrane region" description="Helical; Name=7" evidence="2">
    <location>
        <begin position="281"/>
        <end position="301"/>
    </location>
</feature>
<feature type="topological domain" description="Cytoplasmic" evidence="2">
    <location>
        <begin position="302"/>
        <end position="372"/>
    </location>
</feature>
<feature type="glycosylation site" description="N-linked (GlcNAc...) asparagine" evidence="2">
    <location>
        <position position="4"/>
    </location>
</feature>
<feature type="glycosylation site" description="N-linked (GlcNAc...) asparagine" evidence="2">
    <location>
        <position position="8"/>
    </location>
</feature>
<feature type="glycosylation site" description="N-linked (GlcNAc...) asparagine" evidence="2">
    <location>
        <position position="13"/>
    </location>
</feature>
<feature type="glycosylation site" description="N-linked (GlcNAc...) asparagine" evidence="2">
    <location>
        <position position="173"/>
    </location>
</feature>
<feature type="disulfide bond" evidence="3">
    <location>
        <begin position="98"/>
        <end position="179"/>
    </location>
</feature>
<feature type="sequence conflict" description="In Ref. 2; BAE20836." evidence="4" ref="2">
    <original>E</original>
    <variation>K</variation>
    <location>
        <position position="186"/>
    </location>
</feature>
<feature type="sequence conflict" description="In Ref. 2; BAE20836." evidence="4" ref="2">
    <original>A</original>
    <variation>S</variation>
    <location>
        <position position="242"/>
    </location>
</feature>
<accession>Q149R9</accession>
<accession>Q3V2G2</accession>
<accession>Q80T30</accession>
<evidence type="ECO:0000250" key="1"/>
<evidence type="ECO:0000255" key="2"/>
<evidence type="ECO:0000255" key="3">
    <source>
        <dbReference type="PROSITE-ProRule" id="PRU00521"/>
    </source>
</evidence>
<evidence type="ECO:0000305" key="4"/>
<keyword id="KW-1003">Cell membrane</keyword>
<keyword id="KW-1015">Disulfide bond</keyword>
<keyword id="KW-0297">G-protein coupled receptor</keyword>
<keyword id="KW-0325">Glycoprotein</keyword>
<keyword id="KW-0472">Membrane</keyword>
<keyword id="KW-0675">Receptor</keyword>
<keyword id="KW-1185">Reference proteome</keyword>
<keyword id="KW-0807">Transducer</keyword>
<keyword id="KW-0812">Transmembrane</keyword>
<keyword id="KW-1133">Transmembrane helix</keyword>